<reference key="1">
    <citation type="journal article" date="2010" name="Genome Biol. Evol.">
        <title>Continuing evolution of Burkholderia mallei through genome reduction and large-scale rearrangements.</title>
        <authorList>
            <person name="Losada L."/>
            <person name="Ronning C.M."/>
            <person name="DeShazer D."/>
            <person name="Woods D."/>
            <person name="Fedorova N."/>
            <person name="Kim H.S."/>
            <person name="Shabalina S.A."/>
            <person name="Pearson T.R."/>
            <person name="Brinkac L."/>
            <person name="Tan P."/>
            <person name="Nandi T."/>
            <person name="Crabtree J."/>
            <person name="Badger J."/>
            <person name="Beckstrom-Sternberg S."/>
            <person name="Saqib M."/>
            <person name="Schutzer S.E."/>
            <person name="Keim P."/>
            <person name="Nierman W.C."/>
        </authorList>
    </citation>
    <scope>NUCLEOTIDE SEQUENCE [LARGE SCALE GENOMIC DNA]</scope>
    <source>
        <strain>668</strain>
    </source>
</reference>
<name>RRAAH_BURP6</name>
<proteinExistence type="inferred from homology"/>
<sequence length="165" mass="17301">MMFATTDLCDAHEDRLAAGTLRVLEPVFRPFGGVRRFAGPAATLKLFEDNSLVRTALEQDGAGRVLVVDGGGSLRCALVGGNLGKLAEKNGWAGIVVNGCVRDSDELAECRVGVLALAAHPRKSDKRGAGVSDAPVDVRGTRIVPGDWIYADADGVLVSDDALLE</sequence>
<organism>
    <name type="scientific">Burkholderia pseudomallei (strain 668)</name>
    <dbReference type="NCBI Taxonomy" id="320373"/>
    <lineage>
        <taxon>Bacteria</taxon>
        <taxon>Pseudomonadati</taxon>
        <taxon>Pseudomonadota</taxon>
        <taxon>Betaproteobacteria</taxon>
        <taxon>Burkholderiales</taxon>
        <taxon>Burkholderiaceae</taxon>
        <taxon>Burkholderia</taxon>
        <taxon>pseudomallei group</taxon>
    </lineage>
</organism>
<accession>A3NAY8</accession>
<evidence type="ECO:0000250" key="1"/>
<evidence type="ECO:0000305" key="2"/>
<gene>
    <name type="ordered locus">BURPS668_2477</name>
</gene>
<keyword id="KW-0456">Lyase</keyword>
<keyword id="KW-0479">Metal-binding</keyword>
<dbReference type="EC" id="4.1.3.17"/>
<dbReference type="EC" id="4.1.1.112"/>
<dbReference type="EMBL" id="CP000570">
    <property type="protein sequence ID" value="ABN84000.1"/>
    <property type="molecule type" value="Genomic_DNA"/>
</dbReference>
<dbReference type="SMR" id="A3NAY8"/>
<dbReference type="KEGG" id="bpd:BURPS668_2477"/>
<dbReference type="HOGENOM" id="CLU_072626_4_0_4"/>
<dbReference type="GO" id="GO:0047443">
    <property type="term" value="F:4-hydroxy-4-methyl-2-oxoglutarate aldolase activity"/>
    <property type="evidence" value="ECO:0007669"/>
    <property type="project" value="UniProtKB-EC"/>
</dbReference>
<dbReference type="GO" id="GO:0046872">
    <property type="term" value="F:metal ion binding"/>
    <property type="evidence" value="ECO:0007669"/>
    <property type="project" value="UniProtKB-KW"/>
</dbReference>
<dbReference type="GO" id="GO:0008948">
    <property type="term" value="F:oxaloacetate decarboxylase activity"/>
    <property type="evidence" value="ECO:0007669"/>
    <property type="project" value="UniProtKB-EC"/>
</dbReference>
<dbReference type="GO" id="GO:0008428">
    <property type="term" value="F:ribonuclease inhibitor activity"/>
    <property type="evidence" value="ECO:0007669"/>
    <property type="project" value="InterPro"/>
</dbReference>
<dbReference type="GO" id="GO:0051252">
    <property type="term" value="P:regulation of RNA metabolic process"/>
    <property type="evidence" value="ECO:0007669"/>
    <property type="project" value="InterPro"/>
</dbReference>
<dbReference type="CDD" id="cd16841">
    <property type="entry name" value="RraA_family"/>
    <property type="match status" value="1"/>
</dbReference>
<dbReference type="Gene3D" id="3.50.30.40">
    <property type="entry name" value="Ribonuclease E inhibitor RraA/RraA-like"/>
    <property type="match status" value="1"/>
</dbReference>
<dbReference type="InterPro" id="IPR010203">
    <property type="entry name" value="RraA"/>
</dbReference>
<dbReference type="InterPro" id="IPR005493">
    <property type="entry name" value="RraA/RraA-like"/>
</dbReference>
<dbReference type="InterPro" id="IPR036704">
    <property type="entry name" value="RraA/RraA-like_sf"/>
</dbReference>
<dbReference type="NCBIfam" id="TIGR01935">
    <property type="entry name" value="NOT-MenG"/>
    <property type="match status" value="1"/>
</dbReference>
<dbReference type="NCBIfam" id="NF006875">
    <property type="entry name" value="PRK09372.1"/>
    <property type="match status" value="1"/>
</dbReference>
<dbReference type="PANTHER" id="PTHR33254">
    <property type="entry name" value="4-HYDROXY-4-METHYL-2-OXOGLUTARATE ALDOLASE 3-RELATED"/>
    <property type="match status" value="1"/>
</dbReference>
<dbReference type="PANTHER" id="PTHR33254:SF4">
    <property type="entry name" value="4-HYDROXY-4-METHYL-2-OXOGLUTARATE ALDOLASE 3-RELATED"/>
    <property type="match status" value="1"/>
</dbReference>
<dbReference type="Pfam" id="PF03737">
    <property type="entry name" value="RraA-like"/>
    <property type="match status" value="1"/>
</dbReference>
<dbReference type="SUPFAM" id="SSF89562">
    <property type="entry name" value="RraA-like"/>
    <property type="match status" value="1"/>
</dbReference>
<protein>
    <recommendedName>
        <fullName>Putative 4-hydroxy-4-methyl-2-oxoglutarate aldolase</fullName>
        <shortName>HMG aldolase</shortName>
        <ecNumber>4.1.3.17</ecNumber>
    </recommendedName>
    <alternativeName>
        <fullName>Oxaloacetate decarboxylase</fullName>
        <shortName>OAA decarboxylase</shortName>
        <ecNumber>4.1.1.112</ecNumber>
    </alternativeName>
    <alternativeName>
        <fullName>Regulator of ribonuclease activity homolog</fullName>
    </alternativeName>
    <alternativeName>
        <fullName>RraA-like protein</fullName>
    </alternativeName>
</protein>
<feature type="chain" id="PRO_1000013830" description="Putative 4-hydroxy-4-methyl-2-oxoglutarate aldolase">
    <location>
        <begin position="1"/>
        <end position="165"/>
    </location>
</feature>
<feature type="binding site" evidence="1">
    <location>
        <begin position="80"/>
        <end position="83"/>
    </location>
    <ligand>
        <name>substrate</name>
    </ligand>
</feature>
<feature type="binding site" evidence="1">
    <location>
        <position position="102"/>
    </location>
    <ligand>
        <name>substrate</name>
    </ligand>
</feature>
<feature type="binding site" evidence="1">
    <location>
        <position position="103"/>
    </location>
    <ligand>
        <name>a divalent metal cation</name>
        <dbReference type="ChEBI" id="CHEBI:60240"/>
    </ligand>
</feature>
<comment type="function">
    <text evidence="1">Catalyzes the aldol cleavage of 4-hydroxy-4-methyl-2-oxoglutarate (HMG) into 2 molecules of pyruvate. Also contains a secondary oxaloacetate (OAA) decarboxylase activity due to the common pyruvate enolate transition state formed following C-C bond cleavage in the retro-aldol and decarboxylation reactions (By similarity).</text>
</comment>
<comment type="catalytic activity">
    <reaction>
        <text>4-hydroxy-4-methyl-2-oxoglutarate = 2 pyruvate</text>
        <dbReference type="Rhea" id="RHEA:22748"/>
        <dbReference type="ChEBI" id="CHEBI:15361"/>
        <dbReference type="ChEBI" id="CHEBI:58276"/>
        <dbReference type="EC" id="4.1.3.17"/>
    </reaction>
</comment>
<comment type="catalytic activity">
    <reaction>
        <text>oxaloacetate + H(+) = pyruvate + CO2</text>
        <dbReference type="Rhea" id="RHEA:15641"/>
        <dbReference type="ChEBI" id="CHEBI:15361"/>
        <dbReference type="ChEBI" id="CHEBI:15378"/>
        <dbReference type="ChEBI" id="CHEBI:16452"/>
        <dbReference type="ChEBI" id="CHEBI:16526"/>
        <dbReference type="EC" id="4.1.1.112"/>
    </reaction>
</comment>
<comment type="cofactor">
    <cofactor evidence="1">
        <name>a divalent metal cation</name>
        <dbReference type="ChEBI" id="CHEBI:60240"/>
    </cofactor>
    <text evidence="1">Divalent metal cation.</text>
</comment>
<comment type="subunit">
    <text evidence="1">Homotrimer.</text>
</comment>
<comment type="similarity">
    <text evidence="2">Belongs to the class II aldolase/RraA-like family.</text>
</comment>